<protein>
    <recommendedName>
        <fullName evidence="1">Pyridoxal phosphate homeostasis protein</fullName>
        <shortName evidence="1">PLP homeostasis protein</shortName>
    </recommendedName>
</protein>
<comment type="function">
    <text evidence="1">Pyridoxal 5'-phosphate (PLP)-binding protein, which is involved in PLP homeostasis.</text>
</comment>
<comment type="similarity">
    <text evidence="1">Belongs to the pyridoxal phosphate-binding protein YggS/PROSC family.</text>
</comment>
<comment type="sequence caution" evidence="2">
    <conflict type="erroneous initiation">
        <sequence resource="EMBL-CDS" id="CAF20493"/>
    </conflict>
</comment>
<proteinExistence type="inferred from homology"/>
<reference key="1">
    <citation type="journal article" date="1997" name="Biochem. Biophys. Res. Commun.">
        <title>Cloning, sequencing, and characterization of the ftsZ gene from coryneform bacteria.</title>
        <authorList>
            <person name="Kobayashi M."/>
            <person name="Asai Y."/>
            <person name="Hatakeyama K."/>
            <person name="Kijima N."/>
            <person name="Wachi M."/>
            <person name="Nagai K."/>
            <person name="Yukawa H."/>
        </authorList>
    </citation>
    <scope>NUCLEOTIDE SEQUENCE [GENOMIC DNA]</scope>
</reference>
<reference key="2">
    <citation type="journal article" date="2003" name="Appl. Microbiol. Biotechnol.">
        <title>The Corynebacterium glutamicum genome: features and impacts on biotechnological processes.</title>
        <authorList>
            <person name="Ikeda M."/>
            <person name="Nakagawa S."/>
        </authorList>
    </citation>
    <scope>NUCLEOTIDE SEQUENCE [LARGE SCALE GENOMIC DNA]</scope>
    <source>
        <strain>ATCC 13032 / DSM 20300 / JCM 1318 / BCRC 11384 / CCUG 27702 / LMG 3730 / NBRC 12168 / NCIMB 10025 / NRRL B-2784 / 534</strain>
    </source>
</reference>
<reference key="3">
    <citation type="journal article" date="2003" name="J. Biotechnol.">
        <title>The complete Corynebacterium glutamicum ATCC 13032 genome sequence and its impact on the production of L-aspartate-derived amino acids and vitamins.</title>
        <authorList>
            <person name="Kalinowski J."/>
            <person name="Bathe B."/>
            <person name="Bartels D."/>
            <person name="Bischoff N."/>
            <person name="Bott M."/>
            <person name="Burkovski A."/>
            <person name="Dusch N."/>
            <person name="Eggeling L."/>
            <person name="Eikmanns B.J."/>
            <person name="Gaigalat L."/>
            <person name="Goesmann A."/>
            <person name="Hartmann M."/>
            <person name="Huthmacher K."/>
            <person name="Kraemer R."/>
            <person name="Linke B."/>
            <person name="McHardy A.C."/>
            <person name="Meyer F."/>
            <person name="Moeckel B."/>
            <person name="Pfefferle W."/>
            <person name="Puehler A."/>
            <person name="Rey D.A."/>
            <person name="Rueckert C."/>
            <person name="Rupp O."/>
            <person name="Sahm H."/>
            <person name="Wendisch V.F."/>
            <person name="Wiegraebe I."/>
            <person name="Tauch A."/>
        </authorList>
    </citation>
    <scope>NUCLEOTIDE SEQUENCE [LARGE SCALE GENOMIC DNA]</scope>
    <source>
        <strain>ATCC 13032 / DSM 20300 / JCM 1318 / BCRC 11384 / CCUG 27702 / LMG 3730 / NBRC 12168 / NCIMB 10025 / NRRL B-2784 / 534</strain>
    </source>
</reference>
<name>PLPHP_CORGL</name>
<gene>
    <name type="ordered locus">Cgl2153</name>
    <name type="ordered locus">cg2364</name>
</gene>
<feature type="chain" id="PRO_0000163194" description="Pyridoxal phosphate homeostasis protein">
    <location>
        <begin position="1"/>
        <end position="221"/>
    </location>
</feature>
<feature type="modified residue" description="N6-(pyridoxal phosphate)lysine" evidence="1">
    <location>
        <position position="26"/>
    </location>
</feature>
<feature type="sequence conflict" description="In Ref. 1; BAA21689." evidence="2" ref="1">
    <original>F</original>
    <variation>L</variation>
    <location>
        <position position="39"/>
    </location>
</feature>
<feature type="sequence conflict" description="In Ref. 1; BAA21689." evidence="2" ref="1">
    <original>A</original>
    <variation>S</variation>
    <location>
        <position position="82"/>
    </location>
</feature>
<feature type="sequence conflict" description="In Ref. 1; BAA21689." evidence="2" ref="1">
    <original>D</original>
    <variation>E</variation>
    <location>
        <position position="106"/>
    </location>
</feature>
<feature type="sequence conflict" description="In Ref. 1; BAA21689." evidence="2" ref="1">
    <original>G</original>
    <variation>D</variation>
    <location>
        <position position="164"/>
    </location>
</feature>
<organism>
    <name type="scientific">Corynebacterium glutamicum (strain ATCC 13032 / DSM 20300 / JCM 1318 / BCRC 11384 / CCUG 27702 / LMG 3730 / NBRC 12168 / NCIMB 10025 / NRRL B-2784 / 534)</name>
    <dbReference type="NCBI Taxonomy" id="196627"/>
    <lineage>
        <taxon>Bacteria</taxon>
        <taxon>Bacillati</taxon>
        <taxon>Actinomycetota</taxon>
        <taxon>Actinomycetes</taxon>
        <taxon>Mycobacteriales</taxon>
        <taxon>Corynebacteriaceae</taxon>
        <taxon>Corynebacterium</taxon>
    </lineage>
</organism>
<keyword id="KW-0663">Pyridoxal phosphate</keyword>
<keyword id="KW-1185">Reference proteome</keyword>
<sequence length="221" mass="23975">MQARIDATLNEHNRPEGSVRLLPVTKFHPVEDIKILQEFGVTAVGENREQEARAKALELPDMDFHMIGQIQSKKANSIARWAAAVHSVDSEKIAEALGRGVALALDRGDRTSDELPCFIQLSLDGDPSRGGTPLSQVTQLADCISDTTHLRFEGLMCVPPLGWGPEKAFSQARDVLSGLEEHFDRSLEFSAGMSGDLVAAIKHGSTIVRVGTEILGNRPLA</sequence>
<accession>O24748</accession>
<evidence type="ECO:0000255" key="1">
    <source>
        <dbReference type="HAMAP-Rule" id="MF_02087"/>
    </source>
</evidence>
<evidence type="ECO:0000305" key="2"/>
<dbReference type="EMBL" id="AB003132">
    <property type="protein sequence ID" value="BAA21689.1"/>
    <property type="molecule type" value="Genomic_DNA"/>
</dbReference>
<dbReference type="EMBL" id="BA000036">
    <property type="protein sequence ID" value="BAB99546.1"/>
    <property type="molecule type" value="Genomic_DNA"/>
</dbReference>
<dbReference type="EMBL" id="BX927154">
    <property type="protein sequence ID" value="CAF20493.1"/>
    <property type="status" value="ALT_INIT"/>
    <property type="molecule type" value="Genomic_DNA"/>
</dbReference>
<dbReference type="RefSeq" id="NP_601355.1">
    <property type="nucleotide sequence ID" value="NC_003450.3"/>
</dbReference>
<dbReference type="SMR" id="O24748"/>
<dbReference type="STRING" id="196627.cg2364"/>
<dbReference type="KEGG" id="cgb:cg2364"/>
<dbReference type="KEGG" id="cgl:Cgl2153"/>
<dbReference type="PATRIC" id="fig|196627.13.peg.2091"/>
<dbReference type="eggNOG" id="COG0325">
    <property type="taxonomic scope" value="Bacteria"/>
</dbReference>
<dbReference type="HOGENOM" id="CLU_059988_0_0_11"/>
<dbReference type="OrthoDB" id="9804072at2"/>
<dbReference type="BioCyc" id="CORYNE:G18NG-11745-MONOMER"/>
<dbReference type="Proteomes" id="UP000000582">
    <property type="component" value="Chromosome"/>
</dbReference>
<dbReference type="Proteomes" id="UP000001009">
    <property type="component" value="Chromosome"/>
</dbReference>
<dbReference type="GO" id="GO:0030170">
    <property type="term" value="F:pyridoxal phosphate binding"/>
    <property type="evidence" value="ECO:0007669"/>
    <property type="project" value="UniProtKB-UniRule"/>
</dbReference>
<dbReference type="CDD" id="cd00635">
    <property type="entry name" value="PLPDE_III_YBL036c_like"/>
    <property type="match status" value="1"/>
</dbReference>
<dbReference type="Gene3D" id="3.20.20.10">
    <property type="entry name" value="Alanine racemase"/>
    <property type="match status" value="1"/>
</dbReference>
<dbReference type="HAMAP" id="MF_02087">
    <property type="entry name" value="PLP_homeostasis"/>
    <property type="match status" value="1"/>
</dbReference>
<dbReference type="InterPro" id="IPR001608">
    <property type="entry name" value="Ala_racemase_N"/>
</dbReference>
<dbReference type="InterPro" id="IPR029066">
    <property type="entry name" value="PLP-binding_barrel"/>
</dbReference>
<dbReference type="InterPro" id="IPR011078">
    <property type="entry name" value="PyrdxlP_homeostasis"/>
</dbReference>
<dbReference type="NCBIfam" id="TIGR00044">
    <property type="entry name" value="YggS family pyridoxal phosphate-dependent enzyme"/>
    <property type="match status" value="1"/>
</dbReference>
<dbReference type="PANTHER" id="PTHR10146">
    <property type="entry name" value="PROLINE SYNTHETASE CO-TRANSCRIBED BACTERIAL HOMOLOG PROTEIN"/>
    <property type="match status" value="1"/>
</dbReference>
<dbReference type="PANTHER" id="PTHR10146:SF14">
    <property type="entry name" value="PYRIDOXAL PHOSPHATE HOMEOSTASIS PROTEIN"/>
    <property type="match status" value="1"/>
</dbReference>
<dbReference type="Pfam" id="PF01168">
    <property type="entry name" value="Ala_racemase_N"/>
    <property type="match status" value="1"/>
</dbReference>
<dbReference type="PIRSF" id="PIRSF004848">
    <property type="entry name" value="YBL036c_PLPDEIII"/>
    <property type="match status" value="1"/>
</dbReference>
<dbReference type="SUPFAM" id="SSF51419">
    <property type="entry name" value="PLP-binding barrel"/>
    <property type="match status" value="1"/>
</dbReference>
<dbReference type="PROSITE" id="PS01211">
    <property type="entry name" value="UPF0001"/>
    <property type="match status" value="1"/>
</dbReference>